<name>AMGDS_ACHLA</name>
<evidence type="ECO:0000269" key="1">
    <source>
    </source>
</evidence>
<evidence type="ECO:0000269" key="2">
    <source>
    </source>
</evidence>
<evidence type="ECO:0000305" key="3"/>
<evidence type="ECO:0000305" key="4">
    <source>
    </source>
</evidence>
<evidence type="ECO:0000305" key="5">
    <source>
    </source>
</evidence>
<evidence type="ECO:0000305" key="6">
    <source>
    </source>
</evidence>
<evidence type="ECO:0007829" key="7">
    <source>
        <dbReference type="PDB" id="1Z2T"/>
    </source>
</evidence>
<comment type="function">
    <text evidence="1 2">Glucosyltransferase involved in the biosynthesis of the non-bilayer-prone membrane lipid alpha-monoglucosyldiacylglycerol. This is a major component for maintaining a certain anionic lipid surface charge density, for balancing the bilayer to non-bilayer phase equilibria and for keeping a constant lipid bilayer spontaneous curvature (curvature packing stress). Catalyzes the transfer of a glucosyl residue from UDP-Glc to diacylglycerol (DAG) acceptor to form the corresponding alpha-glucosyl-DAG (1,2-diacyl-3-O-(alpha-D-glucopyranosyl)-sn-glycerol). It can only use UDP-Glc as sugar donor and DAG is the preferred substrate.</text>
</comment>
<comment type="catalytic activity">
    <reaction evidence="1 2">
        <text>a 1,2-diacyl-sn-glycerol + UDP-alpha-D-glucose = a 1,2-diacyl-3-O-(alpha-D-glucopyranosyl)-sn-glycerol + UDP + H(+)</text>
        <dbReference type="Rhea" id="RHEA:47612"/>
        <dbReference type="ChEBI" id="CHEBI:15378"/>
        <dbReference type="ChEBI" id="CHEBI:17670"/>
        <dbReference type="ChEBI" id="CHEBI:17815"/>
        <dbReference type="ChEBI" id="CHEBI:58223"/>
        <dbReference type="ChEBI" id="CHEBI:58885"/>
        <dbReference type="EC" id="2.4.1.337"/>
    </reaction>
</comment>
<comment type="cofactor">
    <cofactor evidence="2">
        <name>Mg(2+)</name>
        <dbReference type="ChEBI" id="CHEBI:18420"/>
    </cofactor>
</comment>
<comment type="activity regulation">
    <text evidence="1 2">Activated by the negatively charged lipids phosphatidylglycerol (PG), cardiolipin (CL), dodecylphosphate-rac-glycerol (PDG), 1,2-dioleoyl-phosphatidylglycerol (DOPG) and phosphatidylserine (PS).</text>
</comment>
<comment type="biophysicochemical properties">
    <kinetics>
        <KM evidence="2">0.37 mM for UDP-Glc (in the presence of DOPG at 31%)</KM>
        <KM evidence="2">0.39 mM for UDP-Glc (in the presence of DOPG at 20%)</KM>
        <KM evidence="2">0.44 mM for UDP-Glc (in the presence of DOPG at 25%)</KM>
        <Vmax evidence="2">3.18 nmol/h/mg enzyme (in the presence of DOPG at 31%)</Vmax>
        <Vmax evidence="2">2.06 nmol/h/mg enzyme (in the presence of DOPG at 25%)</Vmax>
        <Vmax evidence="2">0.55 nmol/h/mg enzyme (in the presence of DOPG at 20%)</Vmax>
    </kinetics>
</comment>
<comment type="subcellular location">
    <subcellularLocation>
        <location evidence="4 5">Cell membrane</location>
        <topology evidence="4 5">Peripheral membrane protein</topology>
        <orientation evidence="4 5">Cytoplasmic side</orientation>
    </subcellularLocation>
    <text>The enzyme binds the membrane surface via electrostatic association with anionic lipids and is accompanied by hydrophobic interactions and by a conformational change induced by nonbilayer-prone lipids. The enzyme is supposed to be located on the cytosolic side of the membrane.</text>
</comment>
<comment type="miscellaneous">
    <text evidence="6">PG could also protect the enzyme from proteolytic digestion of the proteinase K, possibly by orienting a lysine-rich face toward the membrane.</text>
</comment>
<comment type="similarity">
    <text evidence="3">Belongs to the glycosyltransferase group 1 family. Glycosyltransferase 4 subfamily.</text>
</comment>
<proteinExistence type="evidence at protein level"/>
<sequence>MRIGIFSEAYLPLISGVVTSVVNLKEGLEALGHEVYVITPIPSKDKFENDPSVIRIPGWVIPRKSLKGFRLVLFVKRYVRKMRKLKLDVVHIHTEFSMGKLGLAVAKKERIPSVYTLHTSYQDYTHYVSKLLTRFAPNAAKKLAGKINNQYTKNCHMTIVPTKKIYDKMIRLKHDGEFTIIPSGINLKPFYKSSYTSEQVQALKDKLGIRNDEFVAILVARIAKEKSIGDLVEAFVEFYKSYPNSRFIIIGDGPDKPVLDKLIDSKKASKYINTLGFVKNAEVGLYYQIADVFLNASTTETQGLTYVEALAASLPIIVRYDDVFDAFVEDGKNGIFFNKNEELVKHLIHIRQNPEILGTLSKNAEISTKPYAKEVYAKSCETLYLDLIDKNNKKLNKK</sequence>
<organism>
    <name type="scientific">Acholeplasma laidlawii</name>
    <dbReference type="NCBI Taxonomy" id="2148"/>
    <lineage>
        <taxon>Bacteria</taxon>
        <taxon>Bacillati</taxon>
        <taxon>Mycoplasmatota</taxon>
        <taxon>Mollicutes</taxon>
        <taxon>Acholeplasmatales</taxon>
        <taxon>Acholeplasmataceae</taxon>
        <taxon>Acholeplasma</taxon>
    </lineage>
</organism>
<protein>
    <recommendedName>
        <fullName>Alpha-monoglucosyldiacylglycerol synthase</fullName>
        <shortName>Alpha-MGS</shortName>
        <shortName>MGlcDAG synthase</shortName>
        <ecNumber evidence="1 2">2.4.1.337</ecNumber>
    </recommendedName>
    <alternativeName>
        <fullName>1,2-Diacylglycerol 3-glucosyltransferase</fullName>
    </alternativeName>
    <alternativeName>
        <fullName>UDP-glucose:1,2-diacylglycerol 3-alpha-D-glucosyltransferase</fullName>
    </alternativeName>
</protein>
<dbReference type="EC" id="2.4.1.337" evidence="1 2"/>
<dbReference type="EMBL" id="AF349769">
    <property type="protein sequence ID" value="AAK38877.2"/>
    <property type="molecule type" value="Genomic_DNA"/>
</dbReference>
<dbReference type="PDB" id="1Z2T">
    <property type="method" value="NMR"/>
    <property type="chains" value="A=65-87"/>
</dbReference>
<dbReference type="PDBsum" id="1Z2T"/>
<dbReference type="BMRB" id="Q93P60"/>
<dbReference type="SMR" id="Q93P60"/>
<dbReference type="CAZy" id="GT4">
    <property type="family name" value="Glycosyltransferase Family 4"/>
</dbReference>
<dbReference type="BioCyc" id="MetaCyc:MONOMER-19379"/>
<dbReference type="BRENDA" id="2.4.1.336">
    <property type="organism ID" value="64"/>
</dbReference>
<dbReference type="BRENDA" id="2.4.1.337">
    <property type="organism ID" value="64"/>
</dbReference>
<dbReference type="SABIO-RK" id="Q93P60"/>
<dbReference type="EvolutionaryTrace" id="Q93P60"/>
<dbReference type="GO" id="GO:0005886">
    <property type="term" value="C:plasma membrane"/>
    <property type="evidence" value="ECO:0007669"/>
    <property type="project" value="UniProtKB-SubCell"/>
</dbReference>
<dbReference type="GO" id="GO:0047228">
    <property type="term" value="F:1,2-diacylglycerol 3-glucosyltransferase activity"/>
    <property type="evidence" value="ECO:0007669"/>
    <property type="project" value="UniProtKB-EC"/>
</dbReference>
<dbReference type="GO" id="GO:0016758">
    <property type="term" value="F:hexosyltransferase activity"/>
    <property type="evidence" value="ECO:0000314"/>
    <property type="project" value="UniProtKB"/>
</dbReference>
<dbReference type="GO" id="GO:0000287">
    <property type="term" value="F:magnesium ion binding"/>
    <property type="evidence" value="ECO:0000314"/>
    <property type="project" value="UniProtKB"/>
</dbReference>
<dbReference type="GO" id="GO:0006071">
    <property type="term" value="P:glycerol metabolic process"/>
    <property type="evidence" value="ECO:0007669"/>
    <property type="project" value="UniProtKB-KW"/>
</dbReference>
<dbReference type="GO" id="GO:0046467">
    <property type="term" value="P:membrane lipid biosynthetic process"/>
    <property type="evidence" value="ECO:0000314"/>
    <property type="project" value="UniProtKB"/>
</dbReference>
<dbReference type="CDD" id="cd03817">
    <property type="entry name" value="GT4_UGDG-like"/>
    <property type="match status" value="1"/>
</dbReference>
<dbReference type="Gene3D" id="3.40.50.2000">
    <property type="entry name" value="Glycogen Phosphorylase B"/>
    <property type="match status" value="2"/>
</dbReference>
<dbReference type="InterPro" id="IPR001296">
    <property type="entry name" value="Glyco_trans_1"/>
</dbReference>
<dbReference type="InterPro" id="IPR028098">
    <property type="entry name" value="Glyco_trans_4-like_N"/>
</dbReference>
<dbReference type="InterPro" id="IPR050194">
    <property type="entry name" value="Glycosyltransferase_grp1"/>
</dbReference>
<dbReference type="PANTHER" id="PTHR45947">
    <property type="entry name" value="SULFOQUINOVOSYL TRANSFERASE SQD2"/>
    <property type="match status" value="1"/>
</dbReference>
<dbReference type="PANTHER" id="PTHR45947:SF3">
    <property type="entry name" value="SULFOQUINOVOSYL TRANSFERASE SQD2"/>
    <property type="match status" value="1"/>
</dbReference>
<dbReference type="Pfam" id="PF13439">
    <property type="entry name" value="Glyco_transf_4"/>
    <property type="match status" value="1"/>
</dbReference>
<dbReference type="Pfam" id="PF00534">
    <property type="entry name" value="Glycos_transf_1"/>
    <property type="match status" value="1"/>
</dbReference>
<dbReference type="SUPFAM" id="SSF53756">
    <property type="entry name" value="UDP-Glycosyltransferase/glycogen phosphorylase"/>
    <property type="match status" value="1"/>
</dbReference>
<feature type="chain" id="PRO_0000425272" description="Alpha-monoglucosyldiacylglycerol synthase">
    <location>
        <begin position="1"/>
        <end position="398"/>
    </location>
</feature>
<feature type="helix" evidence="7">
    <location>
        <begin position="71"/>
        <end position="78"/>
    </location>
</feature>
<feature type="helix" evidence="7">
    <location>
        <begin position="80"/>
        <end position="83"/>
    </location>
</feature>
<reference key="1">
    <citation type="journal article" date="2001" name="J. Biol. Chem.">
        <title>Sequence properties of the 1,2-diacylglycerol 3-glucosyltransferase from Acholeplasma laidlawii membranes. Recognition of a large group of lipid glycosyltransferases in eubacteria and archaea.</title>
        <authorList>
            <person name="Berg S."/>
            <person name="Edman M."/>
            <person name="Li L."/>
            <person name="Wikstrom M."/>
            <person name="Wieslander A."/>
        </authorList>
    </citation>
    <scope>NUCLEOTIDE SEQUENCE [GENOMIC DNA]</scope>
    <scope>PROTEIN SEQUENCE OF 1-18</scope>
    <scope>FUNCTION</scope>
    <scope>CATALYTIC ACTIVITY</scope>
    <scope>SUBCELLULAR LOCATION</scope>
    <scope>ACTIVITY REGULATION</scope>
    <source>
        <strain>A-EF22</strain>
    </source>
</reference>
<reference key="2">
    <citation type="journal article" date="1997" name="J. Biol. Chem.">
        <title>Lipid dependence and basic kinetics of the purified 1,2-diacylglycerol 3-glucosyltransferase from membranes of Acholeplasma laidlawii.</title>
        <authorList>
            <person name="Karlsson O.P."/>
            <person name="Dahlqvist A."/>
            <person name="Vikstrom S."/>
            <person name="Wieslander A."/>
        </authorList>
    </citation>
    <scope>FUNCTION</scope>
    <scope>CATALYTIC ACTIVITY</scope>
    <scope>BIOPHYSICOCHEMICAL PROPERTIES</scope>
    <scope>COFACTOR</scope>
    <scope>ACTIVITY REGULATION</scope>
    <scope>SUBSTRATE SPECIFICITY</scope>
    <source>
        <strain>A-EF22</strain>
    </source>
</reference>
<reference key="3">
    <citation type="journal article" date="1997" name="J. Biol. Chem.">
        <title>Activating amphiphiles cause a conformational change of the 1,2-diacylglycerol 3-glucosyltransferase from Acholeplasma laidlawii membranes according to proteolytic digestion.</title>
        <authorList>
            <person name="Li L."/>
            <person name="Karlsson O.P."/>
            <person name="Wieslander A."/>
        </authorList>
    </citation>
    <scope>PROTECTION AGAINST PROTEOLYTIC DIGESTION</scope>
    <source>
        <strain>A-EF22</strain>
    </source>
</reference>
<reference key="4">
    <citation type="journal article" date="2003" name="Biochemistry">
        <title>Irreversible binding and activity control of the 1,2-diacylglycerol 3-glucosyltransferase from Acholeplasma laidlawii at an anionic lipid bilayer surface.</title>
        <authorList>
            <person name="Li L."/>
            <person name="Storm P."/>
            <person name="Karlsson O.P."/>
            <person name="Berg S."/>
            <person name="Wieslander A."/>
        </authorList>
    </citation>
    <scope>SUBCELLULAR LOCATION</scope>
    <source>
        <strain>A-EF22</strain>
    </source>
</reference>
<reference key="5">
    <citation type="submission" date="2005-03" db="PDB data bank">
        <title>Structure, position of and membrane-interaction of a putative membrane-anchoring domain of alMGS.</title>
        <authorList>
            <person name="Lind J."/>
            <person name="Barany-Wallje E."/>
            <person name="Ramo T."/>
            <person name="Wieslander A."/>
            <person name="Maler L."/>
        </authorList>
    </citation>
    <scope>STRUCTURE BY NMR OF 65-87</scope>
</reference>
<accession>Q93P60</accession>
<gene>
    <name type="primary">mgs</name>
    <name type="synonym">ALmgs</name>
</gene>
<keyword id="KW-0002">3D-structure</keyword>
<keyword id="KW-0119">Carbohydrate metabolism</keyword>
<keyword id="KW-1003">Cell membrane</keyword>
<keyword id="KW-0903">Direct protein sequencing</keyword>
<keyword id="KW-0319">Glycerol metabolism</keyword>
<keyword id="KW-0328">Glycosyltransferase</keyword>
<keyword id="KW-0444">Lipid biosynthesis</keyword>
<keyword id="KW-0443">Lipid metabolism</keyword>
<keyword id="KW-0460">Magnesium</keyword>
<keyword id="KW-0472">Membrane</keyword>
<keyword id="KW-0808">Transferase</keyword>